<feature type="chain" id="PRO_0000150439" description="Olfactory receptor 1J2">
    <location>
        <begin position="1"/>
        <end position="313"/>
    </location>
</feature>
<feature type="topological domain" description="Extracellular" evidence="1">
    <location>
        <begin position="1"/>
        <end position="25"/>
    </location>
</feature>
<feature type="transmembrane region" description="Helical; Name=1" evidence="1">
    <location>
        <begin position="26"/>
        <end position="49"/>
    </location>
</feature>
<feature type="topological domain" description="Cytoplasmic" evidence="1">
    <location>
        <begin position="50"/>
        <end position="57"/>
    </location>
</feature>
<feature type="transmembrane region" description="Helical; Name=2" evidence="1">
    <location>
        <begin position="58"/>
        <end position="79"/>
    </location>
</feature>
<feature type="topological domain" description="Extracellular" evidence="1">
    <location>
        <begin position="80"/>
        <end position="100"/>
    </location>
</feature>
<feature type="transmembrane region" description="Helical; Name=3" evidence="1">
    <location>
        <begin position="101"/>
        <end position="120"/>
    </location>
</feature>
<feature type="topological domain" description="Cytoplasmic" evidence="1">
    <location>
        <begin position="121"/>
        <end position="139"/>
    </location>
</feature>
<feature type="transmembrane region" description="Helical; Name=4" evidence="1">
    <location>
        <begin position="140"/>
        <end position="158"/>
    </location>
</feature>
<feature type="topological domain" description="Extracellular" evidence="1">
    <location>
        <begin position="159"/>
        <end position="196"/>
    </location>
</feature>
<feature type="transmembrane region" description="Helical; Name=5" evidence="1">
    <location>
        <begin position="197"/>
        <end position="219"/>
    </location>
</feature>
<feature type="topological domain" description="Cytoplasmic" evidence="1">
    <location>
        <begin position="220"/>
        <end position="236"/>
    </location>
</feature>
<feature type="transmembrane region" description="Helical; Name=6" evidence="1">
    <location>
        <begin position="237"/>
        <end position="259"/>
    </location>
</feature>
<feature type="topological domain" description="Extracellular" evidence="1">
    <location>
        <begin position="260"/>
        <end position="272"/>
    </location>
</feature>
<feature type="transmembrane region" description="Helical; Name=7" evidence="1">
    <location>
        <begin position="273"/>
        <end position="292"/>
    </location>
</feature>
<feature type="topological domain" description="Cytoplasmic" evidence="1">
    <location>
        <begin position="293"/>
        <end position="313"/>
    </location>
</feature>
<feature type="glycosylation site" description="N-linked (GlcNAc...) asparagine" evidence="1">
    <location>
        <position position="5"/>
    </location>
</feature>
<feature type="disulfide bond" evidence="2">
    <location>
        <begin position="97"/>
        <end position="189"/>
    </location>
</feature>
<feature type="sequence variant" id="VAR_062010" description="In dbSNP:rs41277120.">
    <original>A</original>
    <variation>T</variation>
    <location>
        <position position="119"/>
    </location>
</feature>
<feature type="sequence variant" id="VAR_053123" description="In dbSNP:rs4836891.">
    <original>R</original>
    <variation>Q</variation>
    <location>
        <position position="165"/>
    </location>
</feature>
<feature type="sequence conflict" description="In Ref. 5; AAF40352." evidence="3" ref="5">
    <original>S</original>
    <variation>T</variation>
    <location>
        <position position="148"/>
    </location>
</feature>
<protein>
    <recommendedName>
        <fullName>Olfactory receptor 1J2</fullName>
    </recommendedName>
    <alternativeName>
        <fullName>HSA5</fullName>
    </alternativeName>
    <alternativeName>
        <fullName>HTPCRX15</fullName>
    </alternativeName>
    <alternativeName>
        <fullName>OST044</fullName>
    </alternativeName>
    <alternativeName>
        <fullName>Olfactory receptor 1J3</fullName>
    </alternativeName>
    <alternativeName>
        <fullName>Olfactory receptor 1J5</fullName>
    </alternativeName>
    <alternativeName>
        <fullName>Olfactory receptor OR9-19</fullName>
    </alternativeName>
</protein>
<accession>Q8NGS2</accession>
<accession>A3KFL9</accession>
<accession>Q6IF14</accession>
<accession>Q96R90</accession>
<accession>Q9NZP1</accession>
<organism>
    <name type="scientific">Homo sapiens</name>
    <name type="common">Human</name>
    <dbReference type="NCBI Taxonomy" id="9606"/>
    <lineage>
        <taxon>Eukaryota</taxon>
        <taxon>Metazoa</taxon>
        <taxon>Chordata</taxon>
        <taxon>Craniata</taxon>
        <taxon>Vertebrata</taxon>
        <taxon>Euteleostomi</taxon>
        <taxon>Mammalia</taxon>
        <taxon>Eutheria</taxon>
        <taxon>Euarchontoglires</taxon>
        <taxon>Primates</taxon>
        <taxon>Haplorrhini</taxon>
        <taxon>Catarrhini</taxon>
        <taxon>Hominidae</taxon>
        <taxon>Homo</taxon>
    </lineage>
</organism>
<comment type="function">
    <text evidence="3">Odorant receptor.</text>
</comment>
<comment type="subcellular location">
    <subcellularLocation>
        <location>Cell membrane</location>
        <topology>Multi-pass membrane protein</topology>
    </subcellularLocation>
</comment>
<comment type="similarity">
    <text evidence="2">Belongs to the G-protein coupled receptor 1 family.</text>
</comment>
<comment type="online information" name="Human Olfactory Receptor Data Exploratorium (HORDE)">
    <link uri="http://genome.weizmann.ac.il/horde/card/index/symbol:OR1J2"/>
</comment>
<reference key="1">
    <citation type="submission" date="2001-07" db="EMBL/GenBank/DDBJ databases">
        <title>Genome-wide discovery and analysis of human seven transmembrane helix receptor genes.</title>
        <authorList>
            <person name="Suwa M."/>
            <person name="Sato T."/>
            <person name="Okouchi I."/>
            <person name="Arita M."/>
            <person name="Futami K."/>
            <person name="Matsumoto S."/>
            <person name="Tsutsumi S."/>
            <person name="Aburatani H."/>
            <person name="Asai K."/>
            <person name="Akiyama Y."/>
        </authorList>
    </citation>
    <scope>NUCLEOTIDE SEQUENCE [GENOMIC DNA]</scope>
</reference>
<reference key="2">
    <citation type="journal article" date="2004" name="Nature">
        <title>DNA sequence and analysis of human chromosome 9.</title>
        <authorList>
            <person name="Humphray S.J."/>
            <person name="Oliver K."/>
            <person name="Hunt A.R."/>
            <person name="Plumb R.W."/>
            <person name="Loveland J.E."/>
            <person name="Howe K.L."/>
            <person name="Andrews T.D."/>
            <person name="Searle S."/>
            <person name="Hunt S.E."/>
            <person name="Scott C.E."/>
            <person name="Jones M.C."/>
            <person name="Ainscough R."/>
            <person name="Almeida J.P."/>
            <person name="Ambrose K.D."/>
            <person name="Ashwell R.I.S."/>
            <person name="Babbage A.K."/>
            <person name="Babbage S."/>
            <person name="Bagguley C.L."/>
            <person name="Bailey J."/>
            <person name="Banerjee R."/>
            <person name="Barker D.J."/>
            <person name="Barlow K.F."/>
            <person name="Bates K."/>
            <person name="Beasley H."/>
            <person name="Beasley O."/>
            <person name="Bird C.P."/>
            <person name="Bray-Allen S."/>
            <person name="Brown A.J."/>
            <person name="Brown J.Y."/>
            <person name="Burford D."/>
            <person name="Burrill W."/>
            <person name="Burton J."/>
            <person name="Carder C."/>
            <person name="Carter N.P."/>
            <person name="Chapman J.C."/>
            <person name="Chen Y."/>
            <person name="Clarke G."/>
            <person name="Clark S.Y."/>
            <person name="Clee C.M."/>
            <person name="Clegg S."/>
            <person name="Collier R.E."/>
            <person name="Corby N."/>
            <person name="Crosier M."/>
            <person name="Cummings A.T."/>
            <person name="Davies J."/>
            <person name="Dhami P."/>
            <person name="Dunn M."/>
            <person name="Dutta I."/>
            <person name="Dyer L.W."/>
            <person name="Earthrowl M.E."/>
            <person name="Faulkner L."/>
            <person name="Fleming C.J."/>
            <person name="Frankish A."/>
            <person name="Frankland J.A."/>
            <person name="French L."/>
            <person name="Fricker D.G."/>
            <person name="Garner P."/>
            <person name="Garnett J."/>
            <person name="Ghori J."/>
            <person name="Gilbert J.G.R."/>
            <person name="Glison C."/>
            <person name="Grafham D.V."/>
            <person name="Gribble S."/>
            <person name="Griffiths C."/>
            <person name="Griffiths-Jones S."/>
            <person name="Grocock R."/>
            <person name="Guy J."/>
            <person name="Hall R.E."/>
            <person name="Hammond S."/>
            <person name="Harley J.L."/>
            <person name="Harrison E.S.I."/>
            <person name="Hart E.A."/>
            <person name="Heath P.D."/>
            <person name="Henderson C.D."/>
            <person name="Hopkins B.L."/>
            <person name="Howard P.J."/>
            <person name="Howden P.J."/>
            <person name="Huckle E."/>
            <person name="Johnson C."/>
            <person name="Johnson D."/>
            <person name="Joy A.A."/>
            <person name="Kay M."/>
            <person name="Keenan S."/>
            <person name="Kershaw J.K."/>
            <person name="Kimberley A.M."/>
            <person name="King A."/>
            <person name="Knights A."/>
            <person name="Laird G.K."/>
            <person name="Langford C."/>
            <person name="Lawlor S."/>
            <person name="Leongamornlert D.A."/>
            <person name="Leversha M."/>
            <person name="Lloyd C."/>
            <person name="Lloyd D.M."/>
            <person name="Lovell J."/>
            <person name="Martin S."/>
            <person name="Mashreghi-Mohammadi M."/>
            <person name="Matthews L."/>
            <person name="McLaren S."/>
            <person name="McLay K.E."/>
            <person name="McMurray A."/>
            <person name="Milne S."/>
            <person name="Nickerson T."/>
            <person name="Nisbett J."/>
            <person name="Nordsiek G."/>
            <person name="Pearce A.V."/>
            <person name="Peck A.I."/>
            <person name="Porter K.M."/>
            <person name="Pandian R."/>
            <person name="Pelan S."/>
            <person name="Phillimore B."/>
            <person name="Povey S."/>
            <person name="Ramsey Y."/>
            <person name="Rand V."/>
            <person name="Scharfe M."/>
            <person name="Sehra H.K."/>
            <person name="Shownkeen R."/>
            <person name="Sims S.K."/>
            <person name="Skuce C.D."/>
            <person name="Smith M."/>
            <person name="Steward C.A."/>
            <person name="Swarbreck D."/>
            <person name="Sycamore N."/>
            <person name="Tester J."/>
            <person name="Thorpe A."/>
            <person name="Tracey A."/>
            <person name="Tromans A."/>
            <person name="Thomas D.W."/>
            <person name="Wall M."/>
            <person name="Wallis J.M."/>
            <person name="West A.P."/>
            <person name="Whitehead S.L."/>
            <person name="Willey D.L."/>
            <person name="Williams S.A."/>
            <person name="Wilming L."/>
            <person name="Wray P.W."/>
            <person name="Young L."/>
            <person name="Ashurst J.L."/>
            <person name="Coulson A."/>
            <person name="Blocker H."/>
            <person name="Durbin R.M."/>
            <person name="Sulston J.E."/>
            <person name="Hubbard T."/>
            <person name="Jackson M.J."/>
            <person name="Bentley D.R."/>
            <person name="Beck S."/>
            <person name="Rogers J."/>
            <person name="Dunham I."/>
        </authorList>
    </citation>
    <scope>NUCLEOTIDE SEQUENCE [LARGE SCALE GENOMIC DNA]</scope>
</reference>
<reference key="3">
    <citation type="submission" date="2005-07" db="EMBL/GenBank/DDBJ databases">
        <authorList>
            <person name="Mural R.J."/>
            <person name="Istrail S."/>
            <person name="Sutton G.G."/>
            <person name="Florea L."/>
            <person name="Halpern A.L."/>
            <person name="Mobarry C.M."/>
            <person name="Lippert R."/>
            <person name="Walenz B."/>
            <person name="Shatkay H."/>
            <person name="Dew I."/>
            <person name="Miller J.R."/>
            <person name="Flanigan M.J."/>
            <person name="Edwards N.J."/>
            <person name="Bolanos R."/>
            <person name="Fasulo D."/>
            <person name="Halldorsson B.V."/>
            <person name="Hannenhalli S."/>
            <person name="Turner R."/>
            <person name="Yooseph S."/>
            <person name="Lu F."/>
            <person name="Nusskern D.R."/>
            <person name="Shue B.C."/>
            <person name="Zheng X.H."/>
            <person name="Zhong F."/>
            <person name="Delcher A.L."/>
            <person name="Huson D.H."/>
            <person name="Kravitz S.A."/>
            <person name="Mouchard L."/>
            <person name="Reinert K."/>
            <person name="Remington K.A."/>
            <person name="Clark A.G."/>
            <person name="Waterman M.S."/>
            <person name="Eichler E.E."/>
            <person name="Adams M.D."/>
            <person name="Hunkapiller M.W."/>
            <person name="Myers E.W."/>
            <person name="Venter J.C."/>
        </authorList>
    </citation>
    <scope>NUCLEOTIDE SEQUENCE [LARGE SCALE GENOMIC DNA]</scope>
</reference>
<reference key="4">
    <citation type="journal article" date="2002" name="Genomics">
        <title>DEFOG: a practical scheme for deciphering families of genes.</title>
        <authorList>
            <person name="Fuchs T."/>
            <person name="Malecova B."/>
            <person name="Linhart C."/>
            <person name="Sharan R."/>
            <person name="Khen M."/>
            <person name="Herwig R."/>
            <person name="Shmulevich D."/>
            <person name="Elkon R."/>
            <person name="Steinfath M."/>
            <person name="O'Brien J.K."/>
            <person name="Radelof U."/>
            <person name="Lehrach H."/>
            <person name="Lancet D."/>
            <person name="Shamir R."/>
        </authorList>
    </citation>
    <scope>NUCLEOTIDE SEQUENCE [GENOMIC DNA] OF 68-283</scope>
</reference>
<reference key="5">
    <citation type="journal article" date="2000" name="Proc. Natl. Acad. Sci. U.S.A.">
        <title>The olfactory receptor gene repertoire in primates and mouse: evidence for reduction of the functional fraction in primates.</title>
        <authorList>
            <person name="Rouquier S."/>
            <person name="Blancher A."/>
            <person name="Giorgi D."/>
        </authorList>
    </citation>
    <scope>NUCLEOTIDE SEQUENCE [GENOMIC DNA] OF 124-285</scope>
</reference>
<reference key="6">
    <citation type="journal article" date="1992" name="Nature">
        <title>Expression of members of the putative olfactory receptor gene family in mammalian germ cells.</title>
        <authorList>
            <person name="Parmentier M."/>
            <person name="Libert F."/>
            <person name="Schurmans S."/>
            <person name="Schiffmann S."/>
            <person name="Lefort A."/>
            <person name="Eggerickx D."/>
            <person name="Ledent C."/>
            <person name="Mollereau C."/>
            <person name="Gerard C."/>
            <person name="Perret J."/>
            <person name="Grootegoed A."/>
            <person name="Vassart G."/>
        </authorList>
    </citation>
    <scope>NUCLEOTIDE SEQUENCE [MRNA] OF 126-239</scope>
    <source>
        <tissue>Testis</tissue>
    </source>
</reference>
<reference key="7">
    <citation type="journal article" date="2004" name="Proc. Natl. Acad. Sci. U.S.A.">
        <title>The human olfactory receptor gene family.</title>
        <authorList>
            <person name="Malnic B."/>
            <person name="Godfrey P.A."/>
            <person name="Buck L.B."/>
        </authorList>
    </citation>
    <scope>IDENTIFICATION</scope>
</reference>
<reference key="8">
    <citation type="journal article" date="2004" name="Proc. Natl. Acad. Sci. U.S.A.">
        <authorList>
            <person name="Malnic B."/>
            <person name="Godfrey P.A."/>
            <person name="Buck L.B."/>
        </authorList>
    </citation>
    <scope>ERRATUM OF PUBMED:14983052</scope>
</reference>
<name>OR1J2_HUMAN</name>
<proteinExistence type="evidence at transcript level"/>
<dbReference type="EMBL" id="AB065717">
    <property type="protein sequence ID" value="BAC05938.1"/>
    <property type="molecule type" value="Genomic_DNA"/>
</dbReference>
<dbReference type="EMBL" id="AL359636">
    <property type="status" value="NOT_ANNOTATED_CDS"/>
    <property type="molecule type" value="Genomic_DNA"/>
</dbReference>
<dbReference type="EMBL" id="CH471090">
    <property type="protein sequence ID" value="EAW87531.1"/>
    <property type="molecule type" value="Genomic_DNA"/>
</dbReference>
<dbReference type="EMBL" id="AF399552">
    <property type="protein sequence ID" value="AAK95037.1"/>
    <property type="molecule type" value="Genomic_DNA"/>
</dbReference>
<dbReference type="EMBL" id="AF179767">
    <property type="protein sequence ID" value="AAF40352.1"/>
    <property type="molecule type" value="Genomic_DNA"/>
</dbReference>
<dbReference type="EMBL" id="X64989">
    <property type="status" value="NOT_ANNOTATED_CDS"/>
    <property type="molecule type" value="mRNA"/>
</dbReference>
<dbReference type="EMBL" id="BK004448">
    <property type="protein sequence ID" value="DAA04846.1"/>
    <property type="molecule type" value="Genomic_DNA"/>
</dbReference>
<dbReference type="CCDS" id="CCDS35121.1"/>
<dbReference type="RefSeq" id="NP_473448.1">
    <property type="nucleotide sequence ID" value="NM_054107.1"/>
</dbReference>
<dbReference type="RefSeq" id="XP_016870112.1">
    <property type="nucleotide sequence ID" value="XM_017014623.1"/>
</dbReference>
<dbReference type="RefSeq" id="XP_024303284.1">
    <property type="nucleotide sequence ID" value="XM_024447516.2"/>
</dbReference>
<dbReference type="RefSeq" id="XP_024303285.1">
    <property type="nucleotide sequence ID" value="XM_024447517.2"/>
</dbReference>
<dbReference type="RefSeq" id="XP_054218715.1">
    <property type="nucleotide sequence ID" value="XM_054362740.1"/>
</dbReference>
<dbReference type="RefSeq" id="XP_054218716.1">
    <property type="nucleotide sequence ID" value="XM_054362741.1"/>
</dbReference>
<dbReference type="SMR" id="Q8NGS2"/>
<dbReference type="FunCoup" id="Q8NGS2">
    <property type="interactions" value="461"/>
</dbReference>
<dbReference type="STRING" id="9606.ENSP00000335575"/>
<dbReference type="GlyCosmos" id="Q8NGS2">
    <property type="glycosylation" value="1 site, No reported glycans"/>
</dbReference>
<dbReference type="GlyGen" id="Q8NGS2">
    <property type="glycosylation" value="1 site"/>
</dbReference>
<dbReference type="BioMuta" id="OR1J2"/>
<dbReference type="DMDM" id="38372761"/>
<dbReference type="MassIVE" id="Q8NGS2"/>
<dbReference type="PaxDb" id="9606-ENSP00000335575"/>
<dbReference type="Antibodypedia" id="66861">
    <property type="antibodies" value="26 antibodies from 10 providers"/>
</dbReference>
<dbReference type="DNASU" id="26740"/>
<dbReference type="Ensembl" id="ENST00000335302.5">
    <property type="protein sequence ID" value="ENSP00000335575.5"/>
    <property type="gene ID" value="ENSG00000197233.7"/>
</dbReference>
<dbReference type="GeneID" id="26740"/>
<dbReference type="KEGG" id="hsa:26740"/>
<dbReference type="MANE-Select" id="ENST00000335302.5">
    <property type="protein sequence ID" value="ENSP00000335575.5"/>
    <property type="RefSeq nucleotide sequence ID" value="NM_054107.1"/>
    <property type="RefSeq protein sequence ID" value="NP_473448.1"/>
</dbReference>
<dbReference type="UCSC" id="uc011lyv.2">
    <property type="organism name" value="human"/>
</dbReference>
<dbReference type="AGR" id="HGNC:8209"/>
<dbReference type="CTD" id="26740"/>
<dbReference type="DisGeNET" id="26740"/>
<dbReference type="GeneCards" id="OR1J2"/>
<dbReference type="HGNC" id="HGNC:8209">
    <property type="gene designation" value="OR1J2"/>
</dbReference>
<dbReference type="HPA" id="ENSG00000197233">
    <property type="expression patterns" value="Not detected"/>
</dbReference>
<dbReference type="neXtProt" id="NX_Q8NGS2"/>
<dbReference type="OpenTargets" id="ENSG00000197233"/>
<dbReference type="PharmGKB" id="PA32080"/>
<dbReference type="VEuPathDB" id="HostDB:ENSG00000197233"/>
<dbReference type="eggNOG" id="ENOG502T8AD">
    <property type="taxonomic scope" value="Eukaryota"/>
</dbReference>
<dbReference type="GeneTree" id="ENSGT00940000163995"/>
<dbReference type="HOGENOM" id="CLU_012526_1_3_1"/>
<dbReference type="InParanoid" id="Q8NGS2"/>
<dbReference type="OMA" id="ANTIPHV"/>
<dbReference type="OrthoDB" id="9975554at2759"/>
<dbReference type="PAN-GO" id="Q8NGS2">
    <property type="GO annotations" value="3 GO annotations based on evolutionary models"/>
</dbReference>
<dbReference type="PhylomeDB" id="Q8NGS2"/>
<dbReference type="TreeFam" id="TF337210"/>
<dbReference type="PathwayCommons" id="Q8NGS2"/>
<dbReference type="Reactome" id="R-HSA-9752946">
    <property type="pathway name" value="Expression and translocation of olfactory receptors"/>
</dbReference>
<dbReference type="BioGRID-ORCS" id="26740">
    <property type="hits" value="11 hits in 737 CRISPR screens"/>
</dbReference>
<dbReference type="ChiTaRS" id="OR1J2">
    <property type="organism name" value="human"/>
</dbReference>
<dbReference type="GeneWiki" id="OR1J2"/>
<dbReference type="GenomeRNAi" id="26740"/>
<dbReference type="Pharos" id="Q8NGS2">
    <property type="development level" value="Tdark"/>
</dbReference>
<dbReference type="PRO" id="PR:Q8NGS2"/>
<dbReference type="Proteomes" id="UP000005640">
    <property type="component" value="Chromosome 9"/>
</dbReference>
<dbReference type="RNAct" id="Q8NGS2">
    <property type="molecule type" value="protein"/>
</dbReference>
<dbReference type="Bgee" id="ENSG00000197233">
    <property type="expression patterns" value="Expressed in male germ line stem cell (sensu Vertebrata) in testis and 7 other cell types or tissues"/>
</dbReference>
<dbReference type="ExpressionAtlas" id="Q8NGS2">
    <property type="expression patterns" value="baseline and differential"/>
</dbReference>
<dbReference type="GO" id="GO:0005886">
    <property type="term" value="C:plasma membrane"/>
    <property type="evidence" value="ECO:0000318"/>
    <property type="project" value="GO_Central"/>
</dbReference>
<dbReference type="GO" id="GO:0004930">
    <property type="term" value="F:G protein-coupled receptor activity"/>
    <property type="evidence" value="ECO:0007669"/>
    <property type="project" value="UniProtKB-KW"/>
</dbReference>
<dbReference type="GO" id="GO:0004984">
    <property type="term" value="F:olfactory receptor activity"/>
    <property type="evidence" value="ECO:0000318"/>
    <property type="project" value="GO_Central"/>
</dbReference>
<dbReference type="GO" id="GO:0007165">
    <property type="term" value="P:signal transduction"/>
    <property type="evidence" value="ECO:0000318"/>
    <property type="project" value="GO_Central"/>
</dbReference>
<dbReference type="CDD" id="cd15918">
    <property type="entry name" value="7tmA_OR1_7-like"/>
    <property type="match status" value="1"/>
</dbReference>
<dbReference type="FunFam" id="1.10.1220.70:FF:000001">
    <property type="entry name" value="Olfactory receptor"/>
    <property type="match status" value="1"/>
</dbReference>
<dbReference type="FunFam" id="1.20.1070.10:FF:000082">
    <property type="entry name" value="Olfactory receptor 1A1"/>
    <property type="match status" value="1"/>
</dbReference>
<dbReference type="Gene3D" id="1.20.1070.10">
    <property type="entry name" value="Rhodopsin 7-helix transmembrane proteins"/>
    <property type="match status" value="1"/>
</dbReference>
<dbReference type="InterPro" id="IPR000276">
    <property type="entry name" value="GPCR_Rhodpsn"/>
</dbReference>
<dbReference type="InterPro" id="IPR017452">
    <property type="entry name" value="GPCR_Rhodpsn_7TM"/>
</dbReference>
<dbReference type="InterPro" id="IPR000725">
    <property type="entry name" value="Olfact_rcpt"/>
</dbReference>
<dbReference type="PANTHER" id="PTHR48001">
    <property type="entry name" value="OLFACTORY RECEPTOR"/>
    <property type="match status" value="1"/>
</dbReference>
<dbReference type="Pfam" id="PF13853">
    <property type="entry name" value="7tm_4"/>
    <property type="match status" value="1"/>
</dbReference>
<dbReference type="PRINTS" id="PR00237">
    <property type="entry name" value="GPCRRHODOPSN"/>
</dbReference>
<dbReference type="PRINTS" id="PR00245">
    <property type="entry name" value="OLFACTORYR"/>
</dbReference>
<dbReference type="SUPFAM" id="SSF81321">
    <property type="entry name" value="Family A G protein-coupled receptor-like"/>
    <property type="match status" value="1"/>
</dbReference>
<dbReference type="PROSITE" id="PS00237">
    <property type="entry name" value="G_PROTEIN_RECEP_F1_1"/>
    <property type="match status" value="1"/>
</dbReference>
<dbReference type="PROSITE" id="PS50262">
    <property type="entry name" value="G_PROTEIN_RECEP_F1_2"/>
    <property type="match status" value="1"/>
</dbReference>
<sequence length="313" mass="35385">MSPENQSSVSEFLLLGLPIRPEQQAVFFTLFLGMYLTTVLGNLLIMLLIQLDSHLHTPMYFFLSHLALTDISFSSVTVPKMLMDMRTKYKSILYEECISQMYFFIFFTDLDSFLITSMAYDRYVAICHPLHYTVIMREELCVFLVAVSWILSCASSLSHTLLLTRLSFCAANTIPHVFCDLAALLKLSCSDIFLNELVMFTVGVVVITLPFMCILVSYGYIGATILRVPSTKGIHKALSTCGSHLSVVSLYYGSIFGQYLFPTVSSSIDKDVIVALMYTVVTPMLNPFIYSLRNRDMKEALGKLFSRATFFSW</sequence>
<keyword id="KW-1003">Cell membrane</keyword>
<keyword id="KW-1015">Disulfide bond</keyword>
<keyword id="KW-0297">G-protein coupled receptor</keyword>
<keyword id="KW-0325">Glycoprotein</keyword>
<keyword id="KW-0472">Membrane</keyword>
<keyword id="KW-0552">Olfaction</keyword>
<keyword id="KW-0675">Receptor</keyword>
<keyword id="KW-1185">Reference proteome</keyword>
<keyword id="KW-0716">Sensory transduction</keyword>
<keyword id="KW-0807">Transducer</keyword>
<keyword id="KW-0812">Transmembrane</keyword>
<keyword id="KW-1133">Transmembrane helix</keyword>
<gene>
    <name type="primary">OR1J2</name>
    <name type="synonym">OR1J3</name>
    <name type="synonym">OR1J5</name>
</gene>
<evidence type="ECO:0000255" key="1"/>
<evidence type="ECO:0000255" key="2">
    <source>
        <dbReference type="PROSITE-ProRule" id="PRU00521"/>
    </source>
</evidence>
<evidence type="ECO:0000305" key="3"/>